<protein>
    <recommendedName>
        <fullName evidence="1">Cobyric acid synthase</fullName>
    </recommendedName>
</protein>
<feature type="chain" id="PRO_1000002373" description="Cobyric acid synthase">
    <location>
        <begin position="1"/>
        <end position="484"/>
    </location>
</feature>
<feature type="domain" description="GATase cobBQ-type" evidence="1">
    <location>
        <begin position="251"/>
        <end position="438"/>
    </location>
</feature>
<feature type="active site" description="Nucleophile" evidence="1">
    <location>
        <position position="333"/>
    </location>
</feature>
<feature type="active site" evidence="1">
    <location>
        <position position="430"/>
    </location>
</feature>
<proteinExistence type="inferred from homology"/>
<reference key="1">
    <citation type="journal article" date="2006" name="Proc. Natl. Acad. Sci. U.S.A.">
        <title>The partitioned Rhizobium etli genome: genetic and metabolic redundancy in seven interacting replicons.</title>
        <authorList>
            <person name="Gonzalez V."/>
            <person name="Santamaria R.I."/>
            <person name="Bustos P."/>
            <person name="Hernandez-Gonzalez I."/>
            <person name="Medrano-Soto A."/>
            <person name="Moreno-Hagelsieb G."/>
            <person name="Janga S.C."/>
            <person name="Ramirez M.A."/>
            <person name="Jimenez-Jacinto V."/>
            <person name="Collado-Vides J."/>
            <person name="Davila G."/>
        </authorList>
    </citation>
    <scope>NUCLEOTIDE SEQUENCE [LARGE SCALE GENOMIC DNA]</scope>
    <source>
        <strain>ATCC 51251 / DSM 11541 / JCM 21823 / NBRC 15573 / CFN 42</strain>
    </source>
</reference>
<evidence type="ECO:0000255" key="1">
    <source>
        <dbReference type="HAMAP-Rule" id="MF_00028"/>
    </source>
</evidence>
<comment type="function">
    <text evidence="1">Catalyzes amidations at positions B, D, E, and G on adenosylcobyrinic A,C-diamide. NH(2) groups are provided by glutamine, and one molecule of ATP is hydrogenolyzed for each amidation.</text>
</comment>
<comment type="pathway">
    <text evidence="1">Cofactor biosynthesis; adenosylcobalamin biosynthesis.</text>
</comment>
<comment type="similarity">
    <text evidence="1">Belongs to the CobB/CobQ family. CobQ subfamily.</text>
</comment>
<gene>
    <name evidence="1" type="primary">cobQ</name>
    <name type="ordered locus">RHE_CH02494</name>
</gene>
<sequence length="484" mass="51349">MARTIMLQGTGSDVGKTVLVAGLCRLAANAGLTVRPFKPQNMSNNAAVADDGGEIGRAQWLQSMAARTPSSVHMNPVLLKPQSENGSQIIVQGRVFGQAKGRDYQRLKPQLLGAVLESFENVCAGADLVVVEGAGSPAEINLRTGDIANMGFATKAGVPVVLVGDINRGGVIASLVGTQAILDEGDRAMIAGYLINKFRGDVSLFDDGIRAIEGFTGWPCFGVVPWLQAATRLPAEDSVVLERLARSGTGALKIAVPMLPRIANFDDLDPLRAEADVELVFVRGGERLPADASLVILPGSKSTISDLADLRVQGWDRDLAAHVRRGGRVIGICGGYQMLGRTVRDPLGIEGGRIEAAGLALLDVETEMAPEKTVRNSQARSSEYDVSLAGYQIHLGVTRGPDCVRPSAIIDGAPDGALSADGRIMGTYLHGLFGSDAYRARLLQSFGLSGERRNYRDSVEQALDEIAGELERHLDPHWLAGLLG</sequence>
<name>COBQ_RHIEC</name>
<accession>Q2K7B5</accession>
<keyword id="KW-0169">Cobalamin biosynthesis</keyword>
<keyword id="KW-0315">Glutamine amidotransferase</keyword>
<keyword id="KW-1185">Reference proteome</keyword>
<organism>
    <name type="scientific">Rhizobium etli (strain ATCC 51251 / DSM 11541 / JCM 21823 / NBRC 15573 / CFN 42)</name>
    <dbReference type="NCBI Taxonomy" id="347834"/>
    <lineage>
        <taxon>Bacteria</taxon>
        <taxon>Pseudomonadati</taxon>
        <taxon>Pseudomonadota</taxon>
        <taxon>Alphaproteobacteria</taxon>
        <taxon>Hyphomicrobiales</taxon>
        <taxon>Rhizobiaceae</taxon>
        <taxon>Rhizobium/Agrobacterium group</taxon>
        <taxon>Rhizobium</taxon>
    </lineage>
</organism>
<dbReference type="EMBL" id="CP000133">
    <property type="protein sequence ID" value="ABC91271.1"/>
    <property type="molecule type" value="Genomic_DNA"/>
</dbReference>
<dbReference type="RefSeq" id="WP_011425749.1">
    <property type="nucleotide sequence ID" value="NC_007761.1"/>
</dbReference>
<dbReference type="SMR" id="Q2K7B5"/>
<dbReference type="KEGG" id="ret:RHE_CH02494"/>
<dbReference type="eggNOG" id="COG1492">
    <property type="taxonomic scope" value="Bacteria"/>
</dbReference>
<dbReference type="HOGENOM" id="CLU_019250_2_0_5"/>
<dbReference type="OrthoDB" id="9808302at2"/>
<dbReference type="UniPathway" id="UPA00148"/>
<dbReference type="Proteomes" id="UP000001936">
    <property type="component" value="Chromosome"/>
</dbReference>
<dbReference type="GO" id="GO:0015420">
    <property type="term" value="F:ABC-type vitamin B12 transporter activity"/>
    <property type="evidence" value="ECO:0007669"/>
    <property type="project" value="UniProtKB-UniRule"/>
</dbReference>
<dbReference type="GO" id="GO:0003824">
    <property type="term" value="F:catalytic activity"/>
    <property type="evidence" value="ECO:0007669"/>
    <property type="project" value="InterPro"/>
</dbReference>
<dbReference type="GO" id="GO:0009236">
    <property type="term" value="P:cobalamin biosynthetic process"/>
    <property type="evidence" value="ECO:0007669"/>
    <property type="project" value="UniProtKB-UniRule"/>
</dbReference>
<dbReference type="CDD" id="cd05389">
    <property type="entry name" value="CobQ_N"/>
    <property type="match status" value="1"/>
</dbReference>
<dbReference type="CDD" id="cd01750">
    <property type="entry name" value="GATase1_CobQ"/>
    <property type="match status" value="1"/>
</dbReference>
<dbReference type="Gene3D" id="3.40.50.880">
    <property type="match status" value="1"/>
</dbReference>
<dbReference type="Gene3D" id="3.40.50.300">
    <property type="entry name" value="P-loop containing nucleotide triphosphate hydrolases"/>
    <property type="match status" value="1"/>
</dbReference>
<dbReference type="HAMAP" id="MF_00028">
    <property type="entry name" value="CobQ"/>
    <property type="match status" value="1"/>
</dbReference>
<dbReference type="InterPro" id="IPR029062">
    <property type="entry name" value="Class_I_gatase-like"/>
</dbReference>
<dbReference type="InterPro" id="IPR002586">
    <property type="entry name" value="CobQ/CobB/MinD/ParA_Nub-bd_dom"/>
</dbReference>
<dbReference type="InterPro" id="IPR033949">
    <property type="entry name" value="CobQ_GATase1"/>
</dbReference>
<dbReference type="InterPro" id="IPR047045">
    <property type="entry name" value="CobQ_N"/>
</dbReference>
<dbReference type="InterPro" id="IPR004459">
    <property type="entry name" value="CobQ_synth"/>
</dbReference>
<dbReference type="InterPro" id="IPR011698">
    <property type="entry name" value="GATase_3"/>
</dbReference>
<dbReference type="InterPro" id="IPR027417">
    <property type="entry name" value="P-loop_NTPase"/>
</dbReference>
<dbReference type="NCBIfam" id="TIGR00313">
    <property type="entry name" value="cobQ"/>
    <property type="match status" value="1"/>
</dbReference>
<dbReference type="NCBIfam" id="NF001989">
    <property type="entry name" value="PRK00784.1"/>
    <property type="match status" value="1"/>
</dbReference>
<dbReference type="PANTHER" id="PTHR21343:SF1">
    <property type="entry name" value="COBYRIC ACID SYNTHASE"/>
    <property type="match status" value="1"/>
</dbReference>
<dbReference type="PANTHER" id="PTHR21343">
    <property type="entry name" value="DETHIOBIOTIN SYNTHETASE"/>
    <property type="match status" value="1"/>
</dbReference>
<dbReference type="Pfam" id="PF01656">
    <property type="entry name" value="CbiA"/>
    <property type="match status" value="1"/>
</dbReference>
<dbReference type="Pfam" id="PF07685">
    <property type="entry name" value="GATase_3"/>
    <property type="match status" value="1"/>
</dbReference>
<dbReference type="SUPFAM" id="SSF52317">
    <property type="entry name" value="Class I glutamine amidotransferase-like"/>
    <property type="match status" value="1"/>
</dbReference>
<dbReference type="SUPFAM" id="SSF52540">
    <property type="entry name" value="P-loop containing nucleoside triphosphate hydrolases"/>
    <property type="match status" value="1"/>
</dbReference>
<dbReference type="PROSITE" id="PS51274">
    <property type="entry name" value="GATASE_COBBQ"/>
    <property type="match status" value="1"/>
</dbReference>